<comment type="function">
    <text evidence="1">Necessary for efficient RNA polymerase transcription elongation past template-encoded arresting sites. The arresting sites in DNA have the property of trapping a certain fraction of elongating RNA polymerases that pass through, resulting in locked ternary complexes. Cleavage of the nascent transcript by cleavage factors such as GreA or GreB allows the resumption of elongation from the new 3'terminus. GreA releases sequences of 2 to 3 nucleotides.</text>
</comment>
<comment type="similarity">
    <text evidence="1">Belongs to the GreA/GreB family.</text>
</comment>
<dbReference type="EMBL" id="CP001147">
    <property type="protein sequence ID" value="ACI20793.1"/>
    <property type="molecule type" value="Genomic_DNA"/>
</dbReference>
<dbReference type="RefSeq" id="WP_012545525.1">
    <property type="nucleotide sequence ID" value="NC_011296.1"/>
</dbReference>
<dbReference type="RefSeq" id="YP_002248384.1">
    <property type="nucleotide sequence ID" value="NC_011296.1"/>
</dbReference>
<dbReference type="SMR" id="B5YJG9"/>
<dbReference type="FunCoup" id="B5YJG9">
    <property type="interactions" value="429"/>
</dbReference>
<dbReference type="STRING" id="289376.THEYE_A0541"/>
<dbReference type="EnsemblBacteria" id="ACI20793">
    <property type="protein sequence ID" value="ACI20793"/>
    <property type="gene ID" value="THEYE_A0541"/>
</dbReference>
<dbReference type="KEGG" id="tye:THEYE_A0541"/>
<dbReference type="PATRIC" id="fig|289376.4.peg.535"/>
<dbReference type="eggNOG" id="COG0782">
    <property type="taxonomic scope" value="Bacteria"/>
</dbReference>
<dbReference type="HOGENOM" id="CLU_101379_2_1_0"/>
<dbReference type="InParanoid" id="B5YJG9"/>
<dbReference type="OrthoDB" id="9808774at2"/>
<dbReference type="Proteomes" id="UP000000718">
    <property type="component" value="Chromosome"/>
</dbReference>
<dbReference type="GO" id="GO:0003677">
    <property type="term" value="F:DNA binding"/>
    <property type="evidence" value="ECO:0007669"/>
    <property type="project" value="UniProtKB-UniRule"/>
</dbReference>
<dbReference type="GO" id="GO:0070063">
    <property type="term" value="F:RNA polymerase binding"/>
    <property type="evidence" value="ECO:0007669"/>
    <property type="project" value="InterPro"/>
</dbReference>
<dbReference type="GO" id="GO:0032784">
    <property type="term" value="P:regulation of DNA-templated transcription elongation"/>
    <property type="evidence" value="ECO:0007669"/>
    <property type="project" value="UniProtKB-UniRule"/>
</dbReference>
<dbReference type="FunFam" id="1.10.287.180:FF:000001">
    <property type="entry name" value="Transcription elongation factor GreA"/>
    <property type="match status" value="1"/>
</dbReference>
<dbReference type="FunFam" id="3.10.50.30:FF:000001">
    <property type="entry name" value="Transcription elongation factor GreA"/>
    <property type="match status" value="1"/>
</dbReference>
<dbReference type="Gene3D" id="3.10.50.30">
    <property type="entry name" value="Transcription elongation factor, GreA/GreB, C-terminal domain"/>
    <property type="match status" value="1"/>
</dbReference>
<dbReference type="Gene3D" id="1.10.287.180">
    <property type="entry name" value="Transcription elongation factor, GreA/GreB, N-terminal domain"/>
    <property type="match status" value="1"/>
</dbReference>
<dbReference type="HAMAP" id="MF_00105">
    <property type="entry name" value="GreA_GreB"/>
    <property type="match status" value="1"/>
</dbReference>
<dbReference type="InterPro" id="IPR036953">
    <property type="entry name" value="GreA/GreB_C_sf"/>
</dbReference>
<dbReference type="InterPro" id="IPR018151">
    <property type="entry name" value="TF_GreA/GreB_CS"/>
</dbReference>
<dbReference type="InterPro" id="IPR006359">
    <property type="entry name" value="Tscrpt_elong_fac_GreA"/>
</dbReference>
<dbReference type="InterPro" id="IPR028624">
    <property type="entry name" value="Tscrpt_elong_fac_GreA/B"/>
</dbReference>
<dbReference type="InterPro" id="IPR001437">
    <property type="entry name" value="Tscrpt_elong_fac_GreA/B_C"/>
</dbReference>
<dbReference type="InterPro" id="IPR023459">
    <property type="entry name" value="Tscrpt_elong_fac_GreA/B_fam"/>
</dbReference>
<dbReference type="InterPro" id="IPR022691">
    <property type="entry name" value="Tscrpt_elong_fac_GreA/B_N"/>
</dbReference>
<dbReference type="InterPro" id="IPR036805">
    <property type="entry name" value="Tscrpt_elong_fac_GreA/B_N_sf"/>
</dbReference>
<dbReference type="NCBIfam" id="TIGR01462">
    <property type="entry name" value="greA"/>
    <property type="match status" value="1"/>
</dbReference>
<dbReference type="NCBIfam" id="NF001261">
    <property type="entry name" value="PRK00226.1-2"/>
    <property type="match status" value="1"/>
</dbReference>
<dbReference type="NCBIfam" id="NF001263">
    <property type="entry name" value="PRK00226.1-4"/>
    <property type="match status" value="1"/>
</dbReference>
<dbReference type="NCBIfam" id="NF001264">
    <property type="entry name" value="PRK00226.1-5"/>
    <property type="match status" value="1"/>
</dbReference>
<dbReference type="PANTHER" id="PTHR30437">
    <property type="entry name" value="TRANSCRIPTION ELONGATION FACTOR GREA"/>
    <property type="match status" value="1"/>
</dbReference>
<dbReference type="PANTHER" id="PTHR30437:SF4">
    <property type="entry name" value="TRANSCRIPTION ELONGATION FACTOR GREA"/>
    <property type="match status" value="1"/>
</dbReference>
<dbReference type="Pfam" id="PF01272">
    <property type="entry name" value="GreA_GreB"/>
    <property type="match status" value="1"/>
</dbReference>
<dbReference type="Pfam" id="PF03449">
    <property type="entry name" value="GreA_GreB_N"/>
    <property type="match status" value="1"/>
</dbReference>
<dbReference type="PIRSF" id="PIRSF006092">
    <property type="entry name" value="GreA_GreB"/>
    <property type="match status" value="1"/>
</dbReference>
<dbReference type="SUPFAM" id="SSF54534">
    <property type="entry name" value="FKBP-like"/>
    <property type="match status" value="1"/>
</dbReference>
<dbReference type="SUPFAM" id="SSF46557">
    <property type="entry name" value="GreA transcript cleavage protein, N-terminal domain"/>
    <property type="match status" value="1"/>
</dbReference>
<dbReference type="PROSITE" id="PS00829">
    <property type="entry name" value="GREAB_1"/>
    <property type="match status" value="1"/>
</dbReference>
<dbReference type="PROSITE" id="PS00830">
    <property type="entry name" value="GREAB_2"/>
    <property type="match status" value="1"/>
</dbReference>
<organism>
    <name type="scientific">Thermodesulfovibrio yellowstonii (strain ATCC 51303 / DSM 11347 / YP87)</name>
    <dbReference type="NCBI Taxonomy" id="289376"/>
    <lineage>
        <taxon>Bacteria</taxon>
        <taxon>Pseudomonadati</taxon>
        <taxon>Nitrospirota</taxon>
        <taxon>Thermodesulfovibrionia</taxon>
        <taxon>Thermodesulfovibrionales</taxon>
        <taxon>Thermodesulfovibrionaceae</taxon>
        <taxon>Thermodesulfovibrio</taxon>
    </lineage>
</organism>
<protein>
    <recommendedName>
        <fullName evidence="1">Transcription elongation factor GreA</fullName>
    </recommendedName>
    <alternativeName>
        <fullName evidence="1">Transcript cleavage factor GreA</fullName>
    </alternativeName>
</protein>
<proteinExistence type="inferred from homology"/>
<reference key="1">
    <citation type="submission" date="2008-08" db="EMBL/GenBank/DDBJ databases">
        <title>The complete genome sequence of Thermodesulfovibrio yellowstonii strain ATCC 51303 / DSM 11347 / YP87.</title>
        <authorList>
            <person name="Dodson R.J."/>
            <person name="Durkin A.S."/>
            <person name="Wu M."/>
            <person name="Eisen J."/>
            <person name="Sutton G."/>
        </authorList>
    </citation>
    <scope>NUCLEOTIDE SEQUENCE [LARGE SCALE GENOMIC DNA]</scope>
    <source>
        <strain>ATCC 51303 / DSM 11347 / YP87</strain>
    </source>
</reference>
<feature type="chain" id="PRO_1000094205" description="Transcription elongation factor GreA">
    <location>
        <begin position="1"/>
        <end position="158"/>
    </location>
</feature>
<feature type="coiled-coil region" evidence="1">
    <location>
        <begin position="47"/>
        <end position="73"/>
    </location>
</feature>
<keyword id="KW-0175">Coiled coil</keyword>
<keyword id="KW-0238">DNA-binding</keyword>
<keyword id="KW-1185">Reference proteome</keyword>
<keyword id="KW-0804">Transcription</keyword>
<keyword id="KW-0805">Transcription regulation</keyword>
<sequence>MTDRIPMTPEGYEKLKEELDRLIKIERPAIIKAIAEARAHGDLSENAEYHAAREKQSFIEGRIQELQAKLARAYVIDPSKINQNKVAFGAKVRVIDIDTEEEKEFHLVGPDEADVKNGKISITSPVGKALIGKEVGEQVTIKAPAKTFNYEIISISFE</sequence>
<evidence type="ECO:0000255" key="1">
    <source>
        <dbReference type="HAMAP-Rule" id="MF_00105"/>
    </source>
</evidence>
<accession>B5YJG9</accession>
<gene>
    <name evidence="1" type="primary">greA</name>
    <name type="ordered locus">THEYE_A0541</name>
</gene>
<name>GREA_THEYD</name>